<organism>
    <name type="scientific">Photorhabdus laumondii subsp. laumondii (strain DSM 15139 / CIP 105565 / TT01)</name>
    <name type="common">Photorhabdus luminescens subsp. laumondii</name>
    <dbReference type="NCBI Taxonomy" id="243265"/>
    <lineage>
        <taxon>Bacteria</taxon>
        <taxon>Pseudomonadati</taxon>
        <taxon>Pseudomonadota</taxon>
        <taxon>Gammaproteobacteria</taxon>
        <taxon>Enterobacterales</taxon>
        <taxon>Morganellaceae</taxon>
        <taxon>Photorhabdus</taxon>
    </lineage>
</organism>
<gene>
    <name evidence="1" type="primary">iscS</name>
    <name type="ordered locus">plu3283</name>
</gene>
<keyword id="KW-0001">2Fe-2S</keyword>
<keyword id="KW-0963">Cytoplasm</keyword>
<keyword id="KW-0408">Iron</keyword>
<keyword id="KW-0411">Iron-sulfur</keyword>
<keyword id="KW-0479">Metal-binding</keyword>
<keyword id="KW-0663">Pyridoxal phosphate</keyword>
<keyword id="KW-1185">Reference proteome</keyword>
<keyword id="KW-0808">Transferase</keyword>
<protein>
    <recommendedName>
        <fullName evidence="1">Cysteine desulfurase IscS</fullName>
        <ecNumber evidence="1">2.8.1.7</ecNumber>
    </recommendedName>
</protein>
<sequence length="404" mass="45100">MKLPIYLDYSATTPVDPRVAEKMMNYLTRDGIFGNPASRSHRFGWQAEEAVDIARNQIADLVGADPREIVFTSGATESDNLAIKGAANFYQKKGKHIITSKTEHKAVLDTCRQLEREGFEVTYLAPQSNGLIDLNDLEAAVRDDTILISIMHVNNEIGVVQDIAAIGEMCRSRGIVFHVDATQSVGKLPIDLTKLKVDLMSFSAHKIYGPMGIGALYVRRKPRIRIEAQQHGGGHERGMRSGTLPVHQIVGMGEAYRIAKQEMESESQRLRGLRLRLWQGIKDIEEVFLNGDLEHGAPHILNVSFNYVEGESLMMSLKDLAVSSGSACTSASLEPSYVLRALGMNDELAHSSIRFSLGRFTTEEEIDYAIELIHKSIGRLRELSPLWEMFRQGVDLNSIEWSHH</sequence>
<proteinExistence type="inferred from homology"/>
<name>ISCS_PHOLL</name>
<feature type="chain" id="PRO_1000019419" description="Cysteine desulfurase IscS">
    <location>
        <begin position="1"/>
        <end position="404"/>
    </location>
</feature>
<feature type="active site" description="Cysteine persulfide intermediate" evidence="1">
    <location>
        <position position="328"/>
    </location>
</feature>
<feature type="binding site" evidence="1">
    <location>
        <begin position="75"/>
        <end position="76"/>
    </location>
    <ligand>
        <name>pyridoxal 5'-phosphate</name>
        <dbReference type="ChEBI" id="CHEBI:597326"/>
    </ligand>
</feature>
<feature type="binding site" evidence="1">
    <location>
        <position position="155"/>
    </location>
    <ligand>
        <name>pyridoxal 5'-phosphate</name>
        <dbReference type="ChEBI" id="CHEBI:597326"/>
    </ligand>
</feature>
<feature type="binding site" evidence="1">
    <location>
        <position position="183"/>
    </location>
    <ligand>
        <name>pyridoxal 5'-phosphate</name>
        <dbReference type="ChEBI" id="CHEBI:597326"/>
    </ligand>
</feature>
<feature type="binding site" evidence="1">
    <location>
        <begin position="203"/>
        <end position="205"/>
    </location>
    <ligand>
        <name>pyridoxal 5'-phosphate</name>
        <dbReference type="ChEBI" id="CHEBI:597326"/>
    </ligand>
</feature>
<feature type="binding site" evidence="1">
    <location>
        <position position="243"/>
    </location>
    <ligand>
        <name>pyridoxal 5'-phosphate</name>
        <dbReference type="ChEBI" id="CHEBI:597326"/>
    </ligand>
</feature>
<feature type="binding site" description="via persulfide group" evidence="1">
    <location>
        <position position="328"/>
    </location>
    <ligand>
        <name>[2Fe-2S] cluster</name>
        <dbReference type="ChEBI" id="CHEBI:190135"/>
        <note>ligand shared with IscU</note>
    </ligand>
</feature>
<feature type="modified residue" description="N6-(pyridoxal phosphate)lysine" evidence="1">
    <location>
        <position position="206"/>
    </location>
</feature>
<comment type="function">
    <text evidence="1">Master enzyme that delivers sulfur to a number of partners involved in Fe-S cluster assembly, tRNA modification or cofactor biosynthesis. Catalyzes the removal of elemental sulfur atoms from cysteine to produce alanine. Functions as a sulfur delivery protein for Fe-S cluster synthesis onto IscU, an Fe-S scaffold assembly protein, as well as other S acceptor proteins.</text>
</comment>
<comment type="catalytic activity">
    <reaction evidence="1">
        <text>(sulfur carrier)-H + L-cysteine = (sulfur carrier)-SH + L-alanine</text>
        <dbReference type="Rhea" id="RHEA:43892"/>
        <dbReference type="Rhea" id="RHEA-COMP:14737"/>
        <dbReference type="Rhea" id="RHEA-COMP:14739"/>
        <dbReference type="ChEBI" id="CHEBI:29917"/>
        <dbReference type="ChEBI" id="CHEBI:35235"/>
        <dbReference type="ChEBI" id="CHEBI:57972"/>
        <dbReference type="ChEBI" id="CHEBI:64428"/>
        <dbReference type="EC" id="2.8.1.7"/>
    </reaction>
</comment>
<comment type="cofactor">
    <cofactor evidence="1">
        <name>pyridoxal 5'-phosphate</name>
        <dbReference type="ChEBI" id="CHEBI:597326"/>
    </cofactor>
</comment>
<comment type="pathway">
    <text evidence="1">Cofactor biosynthesis; iron-sulfur cluster biosynthesis.</text>
</comment>
<comment type="subunit">
    <text evidence="1">Homodimer. Forms a heterotetramer with IscU, interacts with other sulfur acceptors.</text>
</comment>
<comment type="subcellular location">
    <subcellularLocation>
        <location evidence="1">Cytoplasm</location>
    </subcellularLocation>
</comment>
<comment type="similarity">
    <text evidence="1">Belongs to the class-V pyridoxal-phosphate-dependent aminotransferase family. NifS/IscS subfamily.</text>
</comment>
<dbReference type="EC" id="2.8.1.7" evidence="1"/>
<dbReference type="EMBL" id="BX571870">
    <property type="protein sequence ID" value="CAE15657.1"/>
    <property type="molecule type" value="Genomic_DNA"/>
</dbReference>
<dbReference type="RefSeq" id="WP_011147478.1">
    <property type="nucleotide sequence ID" value="NC_005126.1"/>
</dbReference>
<dbReference type="SMR" id="Q7N224"/>
<dbReference type="STRING" id="243265.plu3283"/>
<dbReference type="GeneID" id="48849538"/>
<dbReference type="KEGG" id="plu:plu3283"/>
<dbReference type="eggNOG" id="COG1104">
    <property type="taxonomic scope" value="Bacteria"/>
</dbReference>
<dbReference type="HOGENOM" id="CLU_003433_0_2_6"/>
<dbReference type="OrthoDB" id="9808002at2"/>
<dbReference type="UniPathway" id="UPA00266"/>
<dbReference type="Proteomes" id="UP000002514">
    <property type="component" value="Chromosome"/>
</dbReference>
<dbReference type="GO" id="GO:1990221">
    <property type="term" value="C:L-cysteine desulfurase complex"/>
    <property type="evidence" value="ECO:0007669"/>
    <property type="project" value="UniProtKB-ARBA"/>
</dbReference>
<dbReference type="GO" id="GO:0051537">
    <property type="term" value="F:2 iron, 2 sulfur cluster binding"/>
    <property type="evidence" value="ECO:0007669"/>
    <property type="project" value="UniProtKB-UniRule"/>
</dbReference>
<dbReference type="GO" id="GO:0031071">
    <property type="term" value="F:cysteine desulfurase activity"/>
    <property type="evidence" value="ECO:0007669"/>
    <property type="project" value="UniProtKB-UniRule"/>
</dbReference>
<dbReference type="GO" id="GO:0046872">
    <property type="term" value="F:metal ion binding"/>
    <property type="evidence" value="ECO:0007669"/>
    <property type="project" value="UniProtKB-KW"/>
</dbReference>
<dbReference type="GO" id="GO:0030170">
    <property type="term" value="F:pyridoxal phosphate binding"/>
    <property type="evidence" value="ECO:0007669"/>
    <property type="project" value="UniProtKB-UniRule"/>
</dbReference>
<dbReference type="GO" id="GO:0044571">
    <property type="term" value="P:[2Fe-2S] cluster assembly"/>
    <property type="evidence" value="ECO:0007669"/>
    <property type="project" value="UniProtKB-UniRule"/>
</dbReference>
<dbReference type="FunFam" id="3.40.640.10:FF:000003">
    <property type="entry name" value="Cysteine desulfurase IscS"/>
    <property type="match status" value="1"/>
</dbReference>
<dbReference type="FunFam" id="3.90.1150.10:FF:000002">
    <property type="entry name" value="Cysteine desulfurase IscS"/>
    <property type="match status" value="1"/>
</dbReference>
<dbReference type="Gene3D" id="3.90.1150.10">
    <property type="entry name" value="Aspartate Aminotransferase, domain 1"/>
    <property type="match status" value="1"/>
</dbReference>
<dbReference type="Gene3D" id="3.40.640.10">
    <property type="entry name" value="Type I PLP-dependent aspartate aminotransferase-like (Major domain)"/>
    <property type="match status" value="1"/>
</dbReference>
<dbReference type="HAMAP" id="MF_00331">
    <property type="entry name" value="Cys_desulf_IscS"/>
    <property type="match status" value="1"/>
</dbReference>
<dbReference type="InterPro" id="IPR000192">
    <property type="entry name" value="Aminotrans_V_dom"/>
</dbReference>
<dbReference type="InterPro" id="IPR020578">
    <property type="entry name" value="Aminotrans_V_PyrdxlP_BS"/>
</dbReference>
<dbReference type="InterPro" id="IPR010240">
    <property type="entry name" value="Cys_deSase_IscS"/>
</dbReference>
<dbReference type="InterPro" id="IPR016454">
    <property type="entry name" value="Cysteine_dSase"/>
</dbReference>
<dbReference type="InterPro" id="IPR015424">
    <property type="entry name" value="PyrdxlP-dep_Trfase"/>
</dbReference>
<dbReference type="InterPro" id="IPR015421">
    <property type="entry name" value="PyrdxlP-dep_Trfase_major"/>
</dbReference>
<dbReference type="InterPro" id="IPR015422">
    <property type="entry name" value="PyrdxlP-dep_Trfase_small"/>
</dbReference>
<dbReference type="NCBIfam" id="TIGR02006">
    <property type="entry name" value="IscS"/>
    <property type="match status" value="1"/>
</dbReference>
<dbReference type="NCBIfam" id="NF002806">
    <property type="entry name" value="PRK02948.1"/>
    <property type="match status" value="1"/>
</dbReference>
<dbReference type="NCBIfam" id="NF010611">
    <property type="entry name" value="PRK14012.1"/>
    <property type="match status" value="1"/>
</dbReference>
<dbReference type="PANTHER" id="PTHR11601:SF34">
    <property type="entry name" value="CYSTEINE DESULFURASE"/>
    <property type="match status" value="1"/>
</dbReference>
<dbReference type="PANTHER" id="PTHR11601">
    <property type="entry name" value="CYSTEINE DESULFURYLASE FAMILY MEMBER"/>
    <property type="match status" value="1"/>
</dbReference>
<dbReference type="Pfam" id="PF00266">
    <property type="entry name" value="Aminotran_5"/>
    <property type="match status" value="1"/>
</dbReference>
<dbReference type="PIRSF" id="PIRSF005572">
    <property type="entry name" value="NifS"/>
    <property type="match status" value="1"/>
</dbReference>
<dbReference type="SUPFAM" id="SSF53383">
    <property type="entry name" value="PLP-dependent transferases"/>
    <property type="match status" value="1"/>
</dbReference>
<dbReference type="PROSITE" id="PS00595">
    <property type="entry name" value="AA_TRANSFER_CLASS_5"/>
    <property type="match status" value="1"/>
</dbReference>
<accession>Q7N224</accession>
<evidence type="ECO:0000255" key="1">
    <source>
        <dbReference type="HAMAP-Rule" id="MF_00331"/>
    </source>
</evidence>
<reference key="1">
    <citation type="journal article" date="2003" name="Nat. Biotechnol.">
        <title>The genome sequence of the entomopathogenic bacterium Photorhabdus luminescens.</title>
        <authorList>
            <person name="Duchaud E."/>
            <person name="Rusniok C."/>
            <person name="Frangeul L."/>
            <person name="Buchrieser C."/>
            <person name="Givaudan A."/>
            <person name="Taourit S."/>
            <person name="Bocs S."/>
            <person name="Boursaux-Eude C."/>
            <person name="Chandler M."/>
            <person name="Charles J.-F."/>
            <person name="Dassa E."/>
            <person name="Derose R."/>
            <person name="Derzelle S."/>
            <person name="Freyssinet G."/>
            <person name="Gaudriault S."/>
            <person name="Medigue C."/>
            <person name="Lanois A."/>
            <person name="Powell K."/>
            <person name="Siguier P."/>
            <person name="Vincent R."/>
            <person name="Wingate V."/>
            <person name="Zouine M."/>
            <person name="Glaser P."/>
            <person name="Boemare N."/>
            <person name="Danchin A."/>
            <person name="Kunst F."/>
        </authorList>
    </citation>
    <scope>NUCLEOTIDE SEQUENCE [LARGE SCALE GENOMIC DNA]</scope>
    <source>
        <strain>DSM 15139 / CIP 105565 / TT01</strain>
    </source>
</reference>